<accession>P47670</accession>
<reference key="1">
    <citation type="journal article" date="1995" name="Science">
        <title>The minimal gene complement of Mycoplasma genitalium.</title>
        <authorList>
            <person name="Fraser C.M."/>
            <person name="Gocayne J.D."/>
            <person name="White O."/>
            <person name="Adams M.D."/>
            <person name="Clayton R.A."/>
            <person name="Fleischmann R.D."/>
            <person name="Bult C.J."/>
            <person name="Kerlavage A.R."/>
            <person name="Sutton G.G."/>
            <person name="Kelley J.M."/>
            <person name="Fritchman J.L."/>
            <person name="Weidman J.F."/>
            <person name="Small K.V."/>
            <person name="Sandusky M."/>
            <person name="Fuhrmann J.L."/>
            <person name="Nguyen D.T."/>
            <person name="Utterback T.R."/>
            <person name="Saudek D.M."/>
            <person name="Phillips C.A."/>
            <person name="Merrick J.M."/>
            <person name="Tomb J.-F."/>
            <person name="Dougherty B.A."/>
            <person name="Bott K.F."/>
            <person name="Hu P.-C."/>
            <person name="Lucier T.S."/>
            <person name="Peterson S.N."/>
            <person name="Smith H.O."/>
            <person name="Hutchison C.A. III"/>
            <person name="Venter J.C."/>
        </authorList>
    </citation>
    <scope>NUCLEOTIDE SEQUENCE [LARGE SCALE GENOMIC DNA]</scope>
    <source>
        <strain>ATCC 33530 / DSM 19775 / NCTC 10195 / G37</strain>
    </source>
</reference>
<reference key="2">
    <citation type="journal article" date="1993" name="J. Bacteriol.">
        <title>A survey of the Mycoplasma genitalium genome by using random sequencing.</title>
        <authorList>
            <person name="Peterson S.N."/>
            <person name="Hu P.-C."/>
            <person name="Bott K.F."/>
            <person name="Hutchison C.A. III"/>
        </authorList>
    </citation>
    <scope>NUCLEOTIDE SEQUENCE [GENOMIC DNA] OF 155-244</scope>
    <source>
        <strain>ATCC 33530 / DSM 19775 / NCTC 10195 / G37</strain>
    </source>
</reference>
<sequence>MRTRYLIGNWKTNKNLKDAVSFVEQFQQNKLNYNAKIGIAPVYVHLTEIKKIISDSLLLFAQDANFIESGSYTGTVSFTQLQDIGVNNSIIGHSERRKYYNETSAVINQKLFACLKASMQVVLCIGEALGQEISFLKTDLTNCLDTIDKSLIKNLVIAYEPLWAIGTGKTATPEVANQTIKTIREYINDLYDENVANNISILYGGSVDHNNIQKLAIMEQIDGFLVGKASLEIKNFLEMARVYA</sequence>
<proteinExistence type="inferred from homology"/>
<evidence type="ECO:0000255" key="1">
    <source>
        <dbReference type="HAMAP-Rule" id="MF_00147"/>
    </source>
</evidence>
<feature type="chain" id="PRO_0000090247" description="Triosephosphate isomerase">
    <location>
        <begin position="1"/>
        <end position="244"/>
    </location>
</feature>
<feature type="active site" description="Electrophile" evidence="1">
    <location>
        <position position="93"/>
    </location>
</feature>
<feature type="active site" description="Proton acceptor" evidence="1">
    <location>
        <position position="160"/>
    </location>
</feature>
<feature type="binding site" evidence="1">
    <location>
        <begin position="9"/>
        <end position="11"/>
    </location>
    <ligand>
        <name>substrate</name>
    </ligand>
</feature>
<feature type="binding site" evidence="1">
    <location>
        <position position="166"/>
    </location>
    <ligand>
        <name>substrate</name>
    </ligand>
</feature>
<feature type="binding site" evidence="1">
    <location>
        <position position="206"/>
    </location>
    <ligand>
        <name>substrate</name>
    </ligand>
</feature>
<organism>
    <name type="scientific">Mycoplasma genitalium (strain ATCC 33530 / DSM 19775 / NCTC 10195 / G37)</name>
    <name type="common">Mycoplasmoides genitalium</name>
    <dbReference type="NCBI Taxonomy" id="243273"/>
    <lineage>
        <taxon>Bacteria</taxon>
        <taxon>Bacillati</taxon>
        <taxon>Mycoplasmatota</taxon>
        <taxon>Mycoplasmoidales</taxon>
        <taxon>Mycoplasmoidaceae</taxon>
        <taxon>Mycoplasmoides</taxon>
    </lineage>
</organism>
<name>TPIS_MYCGE</name>
<comment type="function">
    <text evidence="1">Involved in the gluconeogenesis. Catalyzes stereospecifically the conversion of dihydroxyacetone phosphate (DHAP) to D-glyceraldehyde-3-phosphate (G3P).</text>
</comment>
<comment type="catalytic activity">
    <reaction evidence="1">
        <text>D-glyceraldehyde 3-phosphate = dihydroxyacetone phosphate</text>
        <dbReference type="Rhea" id="RHEA:18585"/>
        <dbReference type="ChEBI" id="CHEBI:57642"/>
        <dbReference type="ChEBI" id="CHEBI:59776"/>
        <dbReference type="EC" id="5.3.1.1"/>
    </reaction>
</comment>
<comment type="pathway">
    <text evidence="1">Carbohydrate biosynthesis; gluconeogenesis.</text>
</comment>
<comment type="pathway">
    <text evidence="1">Carbohydrate degradation; glycolysis; D-glyceraldehyde 3-phosphate from glycerone phosphate: step 1/1.</text>
</comment>
<comment type="subunit">
    <text evidence="1">Homodimer.</text>
</comment>
<comment type="subcellular location">
    <subcellularLocation>
        <location evidence="1">Cytoplasm</location>
    </subcellularLocation>
</comment>
<comment type="similarity">
    <text evidence="1">Belongs to the triosephosphate isomerase family.</text>
</comment>
<protein>
    <recommendedName>
        <fullName evidence="1">Triosephosphate isomerase</fullName>
        <shortName evidence="1">TIM</shortName>
        <shortName evidence="1">TPI</shortName>
        <ecNumber evidence="1">5.3.1.1</ecNumber>
    </recommendedName>
    <alternativeName>
        <fullName evidence="1">Triose-phosphate isomerase</fullName>
    </alternativeName>
</protein>
<keyword id="KW-0963">Cytoplasm</keyword>
<keyword id="KW-0312">Gluconeogenesis</keyword>
<keyword id="KW-0324">Glycolysis</keyword>
<keyword id="KW-0413">Isomerase</keyword>
<keyword id="KW-1185">Reference proteome</keyword>
<dbReference type="EC" id="5.3.1.1" evidence="1"/>
<dbReference type="EMBL" id="L43967">
    <property type="protein sequence ID" value="AAC72452.1"/>
    <property type="molecule type" value="Genomic_DNA"/>
</dbReference>
<dbReference type="EMBL" id="U02109">
    <property type="protein sequence ID" value="AAD12380.1"/>
    <property type="molecule type" value="Genomic_DNA"/>
</dbReference>
<dbReference type="PIR" id="F64247">
    <property type="entry name" value="F64247"/>
</dbReference>
<dbReference type="RefSeq" id="WP_009885602.1">
    <property type="nucleotide sequence ID" value="NC_000908.2"/>
</dbReference>
<dbReference type="SMR" id="P47670"/>
<dbReference type="FunCoup" id="P47670">
    <property type="interactions" value="174"/>
</dbReference>
<dbReference type="STRING" id="243273.MG_431"/>
<dbReference type="GeneID" id="88282612"/>
<dbReference type="KEGG" id="mge:MG_431"/>
<dbReference type="eggNOG" id="COG0149">
    <property type="taxonomic scope" value="Bacteria"/>
</dbReference>
<dbReference type="HOGENOM" id="CLU_024251_2_3_14"/>
<dbReference type="InParanoid" id="P47670"/>
<dbReference type="OrthoDB" id="9809429at2"/>
<dbReference type="BioCyc" id="MGEN243273:G1GJ2-525-MONOMER"/>
<dbReference type="UniPathway" id="UPA00109">
    <property type="reaction ID" value="UER00189"/>
</dbReference>
<dbReference type="UniPathway" id="UPA00138"/>
<dbReference type="Proteomes" id="UP000000807">
    <property type="component" value="Chromosome"/>
</dbReference>
<dbReference type="GO" id="GO:0005829">
    <property type="term" value="C:cytosol"/>
    <property type="evidence" value="ECO:0000318"/>
    <property type="project" value="GO_Central"/>
</dbReference>
<dbReference type="GO" id="GO:0004807">
    <property type="term" value="F:triose-phosphate isomerase activity"/>
    <property type="evidence" value="ECO:0000318"/>
    <property type="project" value="GO_Central"/>
</dbReference>
<dbReference type="GO" id="GO:0006094">
    <property type="term" value="P:gluconeogenesis"/>
    <property type="evidence" value="ECO:0000318"/>
    <property type="project" value="GO_Central"/>
</dbReference>
<dbReference type="GO" id="GO:0046166">
    <property type="term" value="P:glyceraldehyde-3-phosphate biosynthetic process"/>
    <property type="evidence" value="ECO:0000318"/>
    <property type="project" value="GO_Central"/>
</dbReference>
<dbReference type="GO" id="GO:0019563">
    <property type="term" value="P:glycerol catabolic process"/>
    <property type="evidence" value="ECO:0000318"/>
    <property type="project" value="GO_Central"/>
</dbReference>
<dbReference type="GO" id="GO:0006096">
    <property type="term" value="P:glycolytic process"/>
    <property type="evidence" value="ECO:0000318"/>
    <property type="project" value="GO_Central"/>
</dbReference>
<dbReference type="CDD" id="cd00311">
    <property type="entry name" value="TIM"/>
    <property type="match status" value="1"/>
</dbReference>
<dbReference type="FunFam" id="3.20.20.70:FF:000016">
    <property type="entry name" value="Triosephosphate isomerase"/>
    <property type="match status" value="1"/>
</dbReference>
<dbReference type="Gene3D" id="3.20.20.70">
    <property type="entry name" value="Aldolase class I"/>
    <property type="match status" value="1"/>
</dbReference>
<dbReference type="HAMAP" id="MF_00147_B">
    <property type="entry name" value="TIM_B"/>
    <property type="match status" value="1"/>
</dbReference>
<dbReference type="InterPro" id="IPR013785">
    <property type="entry name" value="Aldolase_TIM"/>
</dbReference>
<dbReference type="InterPro" id="IPR035990">
    <property type="entry name" value="TIM_sf"/>
</dbReference>
<dbReference type="InterPro" id="IPR022896">
    <property type="entry name" value="TrioseP_Isoase_bac/euk"/>
</dbReference>
<dbReference type="InterPro" id="IPR000652">
    <property type="entry name" value="Triosephosphate_isomerase"/>
</dbReference>
<dbReference type="InterPro" id="IPR020861">
    <property type="entry name" value="Triosephosphate_isomerase_AS"/>
</dbReference>
<dbReference type="NCBIfam" id="TIGR00419">
    <property type="entry name" value="tim"/>
    <property type="match status" value="1"/>
</dbReference>
<dbReference type="PANTHER" id="PTHR21139">
    <property type="entry name" value="TRIOSEPHOSPHATE ISOMERASE"/>
    <property type="match status" value="1"/>
</dbReference>
<dbReference type="PANTHER" id="PTHR21139:SF42">
    <property type="entry name" value="TRIOSEPHOSPHATE ISOMERASE"/>
    <property type="match status" value="1"/>
</dbReference>
<dbReference type="Pfam" id="PF00121">
    <property type="entry name" value="TIM"/>
    <property type="match status" value="1"/>
</dbReference>
<dbReference type="SUPFAM" id="SSF51351">
    <property type="entry name" value="Triosephosphate isomerase (TIM)"/>
    <property type="match status" value="1"/>
</dbReference>
<dbReference type="PROSITE" id="PS00171">
    <property type="entry name" value="TIM_1"/>
    <property type="match status" value="1"/>
</dbReference>
<dbReference type="PROSITE" id="PS51440">
    <property type="entry name" value="TIM_2"/>
    <property type="match status" value="1"/>
</dbReference>
<gene>
    <name evidence="1" type="primary">tpiA</name>
    <name type="synonym">tim</name>
    <name type="synonym">tpi</name>
    <name type="ordered locus">MG431</name>
</gene>